<organism>
    <name type="scientific">Epichloe festucae var. lolii</name>
    <name type="common">Neotyphodium lolii</name>
    <name type="synonym">Acremonium lolii</name>
    <dbReference type="NCBI Taxonomy" id="73839"/>
    <lineage>
        <taxon>Eukaryota</taxon>
        <taxon>Fungi</taxon>
        <taxon>Dikarya</taxon>
        <taxon>Ascomycota</taxon>
        <taxon>Pezizomycotina</taxon>
        <taxon>Sordariomycetes</taxon>
        <taxon>Hypocreomycetidae</taxon>
        <taxon>Hypocreales</taxon>
        <taxon>Clavicipitaceae</taxon>
        <taxon>Epichloe</taxon>
    </lineage>
</organism>
<reference key="1">
    <citation type="journal article" date="2005" name="Mol. Genet. Genomics">
        <title>Molecular cloning and genetic analysis of a symbiosis-expressed gene cluster for lolitrem biosynthesis from a mutualistic endophyte of perennial ryegrass.</title>
        <authorList>
            <person name="Young C.A."/>
            <person name="Bryant M.K."/>
            <person name="Christensen M.J."/>
            <person name="Tapper B.A."/>
            <person name="Bryan G.T."/>
            <person name="Scott B."/>
        </authorList>
    </citation>
    <scope>NUCLEOTIDE SEQUENCE [GENOMIC DNA]</scope>
    <source>
        <strain>Lp19</strain>
    </source>
</reference>
<reference key="2">
    <citation type="journal article" date="2006" name="Fungal Genet. Biol.">
        <title>A complex gene cluster for indole-diterpene biosynthesis in the grass endophyte Neotyphodium lolii.</title>
        <authorList>
            <person name="Young C.A."/>
            <person name="Felitti S."/>
            <person name="Shields K."/>
            <person name="Spangenberg G."/>
            <person name="Johnson R.D."/>
            <person name="Bryan G.T."/>
            <person name="Saikia S."/>
            <person name="Scott B."/>
        </authorList>
    </citation>
    <scope>FUNCTION</scope>
    <source>
        <strain>Lp19</strain>
    </source>
</reference>
<reference key="3">
    <citation type="journal article" date="2010" name="Plant Physiol.">
        <title>Disruption of signaling in a fungal-grass symbiosis leads to pathogenesis.</title>
        <authorList>
            <person name="Eaton C.J."/>
            <person name="Cox M.P."/>
            <person name="Ambrose B."/>
            <person name="Becker M."/>
            <person name="Hesse U."/>
            <person name="Schardl C.L."/>
            <person name="Scott B."/>
        </authorList>
    </citation>
    <scope>INDUCTION</scope>
</reference>
<reference key="4">
    <citation type="journal article" date="2012" name="FEBS Lett.">
        <title>Functional analysis of an indole-diterpene gene cluster for lolitrem B biosynthesis in the grass endosymbiont Epichloe festucae.</title>
        <authorList>
            <person name="Saikia S."/>
            <person name="Takemoto D."/>
            <person name="Tapper B.A."/>
            <person name="Lane G.A."/>
            <person name="Fraser K."/>
            <person name="Scott B."/>
        </authorList>
    </citation>
    <scope>FUNCTION</scope>
    <scope>DISRUPTION PHENOTYPE</scope>
    <scope>PATHWAY</scope>
</reference>
<feature type="chain" id="PRO_0000444332" description="Cytochrome P450 monooxygenase ltmK">
    <location>
        <begin position="1"/>
        <end position="533"/>
    </location>
</feature>
<feature type="transmembrane region" description="Helical" evidence="2">
    <location>
        <begin position="27"/>
        <end position="47"/>
    </location>
</feature>
<feature type="binding site" description="axial binding residue" evidence="1">
    <location>
        <position position="473"/>
    </location>
    <ligand>
        <name>heme</name>
        <dbReference type="ChEBI" id="CHEBI:30413"/>
    </ligand>
    <ligandPart>
        <name>Fe</name>
        <dbReference type="ChEBI" id="CHEBI:18248"/>
    </ligandPart>
</feature>
<feature type="glycosylation site" description="N-linked (GlcNAc...) asparagine" evidence="3">
    <location>
        <position position="116"/>
    </location>
</feature>
<feature type="glycosylation site" description="N-linked (GlcNAc...) asparagine" evidence="3">
    <location>
        <position position="528"/>
    </location>
</feature>
<comment type="function">
    <text evidence="4 5 7">Cytochrome P450 monooxygenase; part of the gene clusters that mediates the biosynthesis of lolitrems, indole-diterpene mycotoxins that are potent tremorgens in mammals, and are synthesized by clavicipitaceous fungal endophytes in association with their grass hosts (PubMed:16765617, PubMed:22750140). The geranylgeranyl diphosphate (GGPP) synthase ltmG is proposed to catalyze the first step in lolitrem biosynthesis (PubMed:15991026, PubMed:16765617). LtmG catalyzes a series of iterative condensations of isopentenyl diphosphate (IPP) with dimethylallyl diphosphate (DMAPP), geranyl diphosphate (GPP), and farnesyl diphosphate (FPP), to form GGPP (PubMed:15991026, PubMed:16765617). GGPP then condenses with indole-3-glycerol phosphate to form 3-geranylgeranylindole, an acyclic intermediate, to be incorporated into paxilline (PubMed:16765617). Either ltmG or ltmC could be responsible for this step, as both are putative prenyl transferases (PubMed:16765617). The FAD-dependent monooxygenase ltmM then catalyzes the epoxidation of the two terminal alkenes of the geranylgeranyl moiety, which is subsequently cyclized by ltmB, to paspaline (PubMed:15991026, PubMed:16765617). The cytochrome P450 monooxygenases ltmQ and ltmP can sequentially oxidize paspaline to terpendole E and terpendole F (PubMed:22750140). Alternatively, ltmP converts paspaline to an intermediate which is oxidized by ltmQ to terpendole F (PubMed:22750140). LtmF, ltmK, ltmE and ltmJ appear to be unique to the epichloe endophytes (PubMed:15991026, PubMed:16765617). The prenyltransferase ltmF is involved in the 27-hydroxyl-O-prenylation (PubMed:22750140). The cytochrome P450 monooxygenase ltmK is required for the oxidative acetal ring formation (PubMed:22750140). The multi-functional prenyltransferase ltmE is required for C20- and C21-prenylations of the indole ring of paspalanes and acts together with the cytochrome P450 monooxygenase ltmJ to yield lolitremanes by multiple oxidations and ring closures (PubMed:22750140). The stereoisomer pairs of lolitriol and lolitrem N or lolitrem B and lolitrem F may be attributed to variations in the way in which ring closure can occur under the action of ltmJ (PubMed:22750140). While the major product of this pathway is lolitrem B, the prenyl transferases and cytochrome P450 monooxygenases identified in this pathway have a remarkable versatility in their regio- and stereo-specificities to generate a diverse range of metabolites that are products of a metabolic grid rather than a linear pathway (PubMed:22750140).</text>
</comment>
<comment type="cofactor">
    <cofactor evidence="1">
        <name>heme</name>
        <dbReference type="ChEBI" id="CHEBI:30413"/>
    </cofactor>
</comment>
<comment type="pathway">
    <text evidence="7">Secondary metabolite biosynthesis.</text>
</comment>
<comment type="subcellular location">
    <subcellularLocation>
        <location evidence="2">Membrane</location>
        <topology evidence="2">Single-pass membrane protein</topology>
    </subcellularLocation>
</comment>
<comment type="induction">
    <text evidence="6">Expression is down-regulated when the stress-activated mitogen-activated protein kinase (sakA) is deleted (PubMed:20519633).</text>
</comment>
<comment type="disruption phenotype">
    <text evidence="7">Does not produce lolitrem B and terpendole C, but accumulates lolitrem E and two other paspalanes, IDT522 and IDT538 (PubMed:22750140).</text>
</comment>
<comment type="similarity">
    <text evidence="9">Belongs to the cytochrome P450 family.</text>
</comment>
<dbReference type="EC" id="1.-.-.-" evidence="10"/>
<dbReference type="EMBL" id="AY742903">
    <property type="protein sequence ID" value="AAW88512.1"/>
    <property type="molecule type" value="Genomic_DNA"/>
</dbReference>
<dbReference type="SMR" id="Q56RZ5"/>
<dbReference type="GlyCosmos" id="Q56RZ5">
    <property type="glycosylation" value="2 sites, No reported glycans"/>
</dbReference>
<dbReference type="GO" id="GO:0016020">
    <property type="term" value="C:membrane"/>
    <property type="evidence" value="ECO:0007669"/>
    <property type="project" value="UniProtKB-SubCell"/>
</dbReference>
<dbReference type="GO" id="GO:0020037">
    <property type="term" value="F:heme binding"/>
    <property type="evidence" value="ECO:0007669"/>
    <property type="project" value="InterPro"/>
</dbReference>
<dbReference type="GO" id="GO:0005506">
    <property type="term" value="F:iron ion binding"/>
    <property type="evidence" value="ECO:0007669"/>
    <property type="project" value="InterPro"/>
</dbReference>
<dbReference type="GO" id="GO:0004497">
    <property type="term" value="F:monooxygenase activity"/>
    <property type="evidence" value="ECO:0007669"/>
    <property type="project" value="UniProtKB-KW"/>
</dbReference>
<dbReference type="GO" id="GO:0016705">
    <property type="term" value="F:oxidoreductase activity, acting on paired donors, with incorporation or reduction of molecular oxygen"/>
    <property type="evidence" value="ECO:0007669"/>
    <property type="project" value="InterPro"/>
</dbReference>
<dbReference type="GO" id="GO:0019748">
    <property type="term" value="P:secondary metabolic process"/>
    <property type="evidence" value="ECO:0007669"/>
    <property type="project" value="UniProtKB-ARBA"/>
</dbReference>
<dbReference type="CDD" id="cd11041">
    <property type="entry name" value="CYP503A1-like"/>
    <property type="match status" value="1"/>
</dbReference>
<dbReference type="Gene3D" id="1.10.630.10">
    <property type="entry name" value="Cytochrome P450"/>
    <property type="match status" value="1"/>
</dbReference>
<dbReference type="InterPro" id="IPR001128">
    <property type="entry name" value="Cyt_P450"/>
</dbReference>
<dbReference type="InterPro" id="IPR002403">
    <property type="entry name" value="Cyt_P450_E_grp-IV"/>
</dbReference>
<dbReference type="InterPro" id="IPR036396">
    <property type="entry name" value="Cyt_P450_sf"/>
</dbReference>
<dbReference type="PANTHER" id="PTHR46206">
    <property type="entry name" value="CYTOCHROME P450"/>
    <property type="match status" value="1"/>
</dbReference>
<dbReference type="PANTHER" id="PTHR46206:SF4">
    <property type="entry name" value="P450, PUTATIVE (EUROFUNG)-RELATED"/>
    <property type="match status" value="1"/>
</dbReference>
<dbReference type="Pfam" id="PF00067">
    <property type="entry name" value="p450"/>
    <property type="match status" value="1"/>
</dbReference>
<dbReference type="PRINTS" id="PR00465">
    <property type="entry name" value="EP450IV"/>
</dbReference>
<dbReference type="SUPFAM" id="SSF48264">
    <property type="entry name" value="Cytochrome P450"/>
    <property type="match status" value="1"/>
</dbReference>
<sequence>MQYGNLTTVLLLRNTLLSLNSSSICHVHWLQVIVALLVLIVCIFLYWRTPTGINAPFAGYRSPWEPPLLVQMRYVFNAASMIREGYAKWKDSLFQISRYDGDILIVPPRYLDDLHNKSQEELSAIYGLIRNFGGSYSGITLLGENDVGIRALQTKITPNLAKLCDDIRDEFQYCLDTDFPACRDWTSVSVHPLFLKAVERITHRIFVGLPLCRNPQWVQATSKHAHYATMIQIAMRSVPKFIQPLLNFCLPWPWKNAACVREAKNALILEMQRRRNLEKVNSFDYIKSNDLLQAVMEMSSPSHEDSQLDVVAQIMLTMNTIAGHSTAASGAHALFDMVSHSKYIELLREEALQVFRHVELRVTKQALGDLRKLDSFLRESQRHNPLSLLGFFRVVLDPAGITLQDGTHVPYNTLLCVAPHAISNDPDVIEDPTSFNGLRYYEQRCRDASQEKKHQYATTDKSHLHFGYGTWACPGRFLASDMLKVILTMLLLQYDIRSPERAKRPVAGHFHEFPLFNINTPLLMKRRNDSLVL</sequence>
<proteinExistence type="evidence at transcript level"/>
<accession>Q56RZ5</accession>
<keyword id="KW-0325">Glycoprotein</keyword>
<keyword id="KW-0349">Heme</keyword>
<keyword id="KW-0408">Iron</keyword>
<keyword id="KW-0472">Membrane</keyword>
<keyword id="KW-0479">Metal-binding</keyword>
<keyword id="KW-0503">Monooxygenase</keyword>
<keyword id="KW-0560">Oxidoreductase</keyword>
<keyword id="KW-0812">Transmembrane</keyword>
<keyword id="KW-1133">Transmembrane helix</keyword>
<gene>
    <name evidence="8" type="primary">ltmK</name>
</gene>
<name>LTMK_EPIFI</name>
<evidence type="ECO:0000250" key="1">
    <source>
        <dbReference type="UniProtKB" id="P04798"/>
    </source>
</evidence>
<evidence type="ECO:0000255" key="2"/>
<evidence type="ECO:0000255" key="3">
    <source>
        <dbReference type="PROSITE-ProRule" id="PRU00498"/>
    </source>
</evidence>
<evidence type="ECO:0000269" key="4">
    <source>
    </source>
</evidence>
<evidence type="ECO:0000269" key="5">
    <source>
    </source>
</evidence>
<evidence type="ECO:0000269" key="6">
    <source>
    </source>
</evidence>
<evidence type="ECO:0000269" key="7">
    <source>
    </source>
</evidence>
<evidence type="ECO:0000303" key="8">
    <source>
    </source>
</evidence>
<evidence type="ECO:0000305" key="9"/>
<evidence type="ECO:0000305" key="10">
    <source>
    </source>
</evidence>
<protein>
    <recommendedName>
        <fullName evidence="8">Cytochrome P450 monooxygenase ltmK</fullName>
        <ecNumber evidence="10">1.-.-.-</ecNumber>
    </recommendedName>
    <alternativeName>
        <fullName evidence="8">Lolitrem B biosynthesis cluster 1 protein K</fullName>
    </alternativeName>
</protein>